<accession>Q6FSW5</accession>
<gene>
    <name type="primary">RCF1</name>
    <name type="synonym">AIM31</name>
    <name type="ordered locus">CAGL0G07315g</name>
</gene>
<dbReference type="EMBL" id="CR380953">
    <property type="protein sequence ID" value="CAG59606.1"/>
    <property type="molecule type" value="Genomic_DNA"/>
</dbReference>
<dbReference type="RefSeq" id="XP_446679.1">
    <property type="nucleotide sequence ID" value="XM_446679.1"/>
</dbReference>
<dbReference type="SMR" id="Q6FSW5"/>
<dbReference type="FunCoup" id="Q6FSW5">
    <property type="interactions" value="113"/>
</dbReference>
<dbReference type="STRING" id="284593.Q6FSW5"/>
<dbReference type="EnsemblFungi" id="CAGL0G07315g-T">
    <property type="protein sequence ID" value="CAGL0G07315g-T-p1"/>
    <property type="gene ID" value="CAGL0G07315g"/>
</dbReference>
<dbReference type="KEGG" id="cgr:2888108"/>
<dbReference type="CGD" id="CAL0130711">
    <property type="gene designation" value="CAGL0G07315g"/>
</dbReference>
<dbReference type="VEuPathDB" id="FungiDB:B1J91_G07315g"/>
<dbReference type="VEuPathDB" id="FungiDB:CAGL0G07315g"/>
<dbReference type="eggNOG" id="KOG4431">
    <property type="taxonomic scope" value="Eukaryota"/>
</dbReference>
<dbReference type="HOGENOM" id="CLU_087356_1_0_1"/>
<dbReference type="InParanoid" id="Q6FSW5"/>
<dbReference type="Proteomes" id="UP000002428">
    <property type="component" value="Chromosome G"/>
</dbReference>
<dbReference type="GO" id="GO:0005743">
    <property type="term" value="C:mitochondrial inner membrane"/>
    <property type="evidence" value="ECO:0007669"/>
    <property type="project" value="EnsemblFungi"/>
</dbReference>
<dbReference type="GO" id="GO:0098803">
    <property type="term" value="C:respiratory chain complex"/>
    <property type="evidence" value="ECO:0007669"/>
    <property type="project" value="EnsemblFungi"/>
</dbReference>
<dbReference type="GO" id="GO:0033617">
    <property type="term" value="P:mitochondrial cytochrome c oxidase assembly"/>
    <property type="evidence" value="ECO:0007669"/>
    <property type="project" value="EnsemblFungi"/>
</dbReference>
<dbReference type="GO" id="GO:0097250">
    <property type="term" value="P:mitochondrial respirasome assembly"/>
    <property type="evidence" value="ECO:0007669"/>
    <property type="project" value="EnsemblFungi"/>
</dbReference>
<dbReference type="GO" id="GO:0010155">
    <property type="term" value="P:regulation of proton transport"/>
    <property type="evidence" value="ECO:0007669"/>
    <property type="project" value="EnsemblFungi"/>
</dbReference>
<dbReference type="Gene3D" id="6.10.140.1320">
    <property type="match status" value="1"/>
</dbReference>
<dbReference type="InterPro" id="IPR007667">
    <property type="entry name" value="Hypoxia_induced_domain"/>
</dbReference>
<dbReference type="InterPro" id="IPR050355">
    <property type="entry name" value="RCF1"/>
</dbReference>
<dbReference type="PANTHER" id="PTHR12297:SF3">
    <property type="entry name" value="HIG1 DOMAIN FAMILY MEMBER 1A"/>
    <property type="match status" value="1"/>
</dbReference>
<dbReference type="PANTHER" id="PTHR12297">
    <property type="entry name" value="HYPOXIA-INDUCBILE GENE 1 HIG1 -RELATED"/>
    <property type="match status" value="1"/>
</dbReference>
<dbReference type="Pfam" id="PF04588">
    <property type="entry name" value="HIG_1_N"/>
    <property type="match status" value="1"/>
</dbReference>
<dbReference type="PROSITE" id="PS51503">
    <property type="entry name" value="HIG1"/>
    <property type="match status" value="1"/>
</dbReference>
<proteinExistence type="inferred from homology"/>
<comment type="function">
    <text evidence="1">Cytochrome c oxidase subunit which plays a role in assembly of respiratory supercomplexes.</text>
</comment>
<comment type="subunit">
    <text evidence="1">Associates with the respiratory chain complex III/complex IV supercomplex.</text>
</comment>
<comment type="subcellular location">
    <subcellularLocation>
        <location evidence="3">Mitochondrion membrane</location>
        <topology evidence="3">Multi-pass membrane protein</topology>
    </subcellularLocation>
</comment>
<comment type="similarity">
    <text evidence="4">Belongs to the RCF1 family.</text>
</comment>
<feature type="chain" id="PRO_0000399626" description="Respiratory supercomplex factor 1, mitochondrial">
    <location>
        <begin position="1"/>
        <end position="158"/>
    </location>
</feature>
<feature type="transmembrane region" description="Helical" evidence="3">
    <location>
        <begin position="32"/>
        <end position="54"/>
    </location>
</feature>
<feature type="transmembrane region" description="Helical" evidence="3">
    <location>
        <begin position="64"/>
        <end position="86"/>
    </location>
</feature>
<feature type="domain" description="HIG1" evidence="3">
    <location>
        <begin position="5"/>
        <end position="96"/>
    </location>
</feature>
<feature type="coiled-coil region" evidence="2">
    <location>
        <begin position="99"/>
        <end position="158"/>
    </location>
</feature>
<organism>
    <name type="scientific">Candida glabrata (strain ATCC 2001 / BCRC 20586 / JCM 3761 / NBRC 0622 / NRRL Y-65 / CBS 138)</name>
    <name type="common">Yeast</name>
    <name type="synonym">Nakaseomyces glabratus</name>
    <dbReference type="NCBI Taxonomy" id="284593"/>
    <lineage>
        <taxon>Eukaryota</taxon>
        <taxon>Fungi</taxon>
        <taxon>Dikarya</taxon>
        <taxon>Ascomycota</taxon>
        <taxon>Saccharomycotina</taxon>
        <taxon>Saccharomycetes</taxon>
        <taxon>Saccharomycetales</taxon>
        <taxon>Saccharomycetaceae</taxon>
        <taxon>Nakaseomyces</taxon>
    </lineage>
</organism>
<sequence length="158" mass="18129">MSRLPSSFDVEDADVEELSFADKIVYHCKQQPLVPIGTLLTTGAVILAAQNMRIGNRKKTQFYFRWRVGLQAATLAALVAGSFIYGKDKYDQKKKEDQMKEKAKLREQLWIKELERRDAEAQDRKKKAEAARLKTKENEAAIQKLEQELKELEAKASK</sequence>
<keyword id="KW-0175">Coiled coil</keyword>
<keyword id="KW-0472">Membrane</keyword>
<keyword id="KW-0496">Mitochondrion</keyword>
<keyword id="KW-1185">Reference proteome</keyword>
<keyword id="KW-0812">Transmembrane</keyword>
<keyword id="KW-1133">Transmembrane helix</keyword>
<reference key="1">
    <citation type="journal article" date="2004" name="Nature">
        <title>Genome evolution in yeasts.</title>
        <authorList>
            <person name="Dujon B."/>
            <person name="Sherman D."/>
            <person name="Fischer G."/>
            <person name="Durrens P."/>
            <person name="Casaregola S."/>
            <person name="Lafontaine I."/>
            <person name="de Montigny J."/>
            <person name="Marck C."/>
            <person name="Neuveglise C."/>
            <person name="Talla E."/>
            <person name="Goffard N."/>
            <person name="Frangeul L."/>
            <person name="Aigle M."/>
            <person name="Anthouard V."/>
            <person name="Babour A."/>
            <person name="Barbe V."/>
            <person name="Barnay S."/>
            <person name="Blanchin S."/>
            <person name="Beckerich J.-M."/>
            <person name="Beyne E."/>
            <person name="Bleykasten C."/>
            <person name="Boisrame A."/>
            <person name="Boyer J."/>
            <person name="Cattolico L."/>
            <person name="Confanioleri F."/>
            <person name="de Daruvar A."/>
            <person name="Despons L."/>
            <person name="Fabre E."/>
            <person name="Fairhead C."/>
            <person name="Ferry-Dumazet H."/>
            <person name="Groppi A."/>
            <person name="Hantraye F."/>
            <person name="Hennequin C."/>
            <person name="Jauniaux N."/>
            <person name="Joyet P."/>
            <person name="Kachouri R."/>
            <person name="Kerrest A."/>
            <person name="Koszul R."/>
            <person name="Lemaire M."/>
            <person name="Lesur I."/>
            <person name="Ma L."/>
            <person name="Muller H."/>
            <person name="Nicaud J.-M."/>
            <person name="Nikolski M."/>
            <person name="Oztas S."/>
            <person name="Ozier-Kalogeropoulos O."/>
            <person name="Pellenz S."/>
            <person name="Potier S."/>
            <person name="Richard G.-F."/>
            <person name="Straub M.-L."/>
            <person name="Suleau A."/>
            <person name="Swennen D."/>
            <person name="Tekaia F."/>
            <person name="Wesolowski-Louvel M."/>
            <person name="Westhof E."/>
            <person name="Wirth B."/>
            <person name="Zeniou-Meyer M."/>
            <person name="Zivanovic Y."/>
            <person name="Bolotin-Fukuhara M."/>
            <person name="Thierry A."/>
            <person name="Bouchier C."/>
            <person name="Caudron B."/>
            <person name="Scarpelli C."/>
            <person name="Gaillardin C."/>
            <person name="Weissenbach J."/>
            <person name="Wincker P."/>
            <person name="Souciet J.-L."/>
        </authorList>
    </citation>
    <scope>NUCLEOTIDE SEQUENCE [LARGE SCALE GENOMIC DNA]</scope>
    <source>
        <strain>ATCC 2001 / BCRC 20586 / JCM 3761 / NBRC 0622 / NRRL Y-65 / CBS 138</strain>
    </source>
</reference>
<protein>
    <recommendedName>
        <fullName>Respiratory supercomplex factor 1, mitochondrial</fullName>
    </recommendedName>
</protein>
<evidence type="ECO:0000250" key="1"/>
<evidence type="ECO:0000255" key="2"/>
<evidence type="ECO:0000255" key="3">
    <source>
        <dbReference type="PROSITE-ProRule" id="PRU00836"/>
    </source>
</evidence>
<evidence type="ECO:0000305" key="4"/>
<name>RCF1_CANGA</name>